<sequence>MDHLKRQDEKVFAAIEAELGRQRSKIELIASENFVSEAVMEAQGSVLTNKYAEGYPGKRYYGGCEHVDVVEDIARDRVKEIFGAEHVNVQPHSGAQANMAVYFTILEQGDTVLGMNLSHGGHLTHGSPVNFSGVQYNFVEYGVDAESHCINYDDVLAKAKEHKPKLIVAGASAYPRVIDFKRFREIADEVGAYLMVDMAHIAGLVAAGLHPNPVPHAHFVTTTTHKTLRGPRGGMILCEEQFAKQIDKSIFPGIQGGPLMHVIAAKAVAFGEALQDDFKTYAQNIINNANRLAEGLQKEGLTLVSGGTDNHLILIDVRNLEITGKVAEHVLDEVGITVNKNTIPFETASPFVTSGVRIGTAAVTSRGFGLEDMDEIASLIAYTLKNHENEAALEEARKRVEALTSKFPMYTDL</sequence>
<dbReference type="EC" id="2.1.2.1" evidence="1"/>
<dbReference type="EMBL" id="CP001215">
    <property type="protein sequence ID" value="ACP14420.1"/>
    <property type="molecule type" value="Genomic_DNA"/>
</dbReference>
<dbReference type="RefSeq" id="WP_000349814.1">
    <property type="nucleotide sequence ID" value="NC_012581.1"/>
</dbReference>
<dbReference type="SMR" id="C3LFJ0"/>
<dbReference type="GeneID" id="45025146"/>
<dbReference type="KEGG" id="bah:BAMEG_5605"/>
<dbReference type="HOGENOM" id="CLU_022477_2_1_9"/>
<dbReference type="UniPathway" id="UPA00193"/>
<dbReference type="UniPathway" id="UPA00288">
    <property type="reaction ID" value="UER01023"/>
</dbReference>
<dbReference type="GO" id="GO:0005829">
    <property type="term" value="C:cytosol"/>
    <property type="evidence" value="ECO:0007669"/>
    <property type="project" value="TreeGrafter"/>
</dbReference>
<dbReference type="GO" id="GO:0004372">
    <property type="term" value="F:glycine hydroxymethyltransferase activity"/>
    <property type="evidence" value="ECO:0007669"/>
    <property type="project" value="UniProtKB-UniRule"/>
</dbReference>
<dbReference type="GO" id="GO:0030170">
    <property type="term" value="F:pyridoxal phosphate binding"/>
    <property type="evidence" value="ECO:0007669"/>
    <property type="project" value="UniProtKB-UniRule"/>
</dbReference>
<dbReference type="GO" id="GO:0019264">
    <property type="term" value="P:glycine biosynthetic process from serine"/>
    <property type="evidence" value="ECO:0007669"/>
    <property type="project" value="UniProtKB-UniRule"/>
</dbReference>
<dbReference type="GO" id="GO:0035999">
    <property type="term" value="P:tetrahydrofolate interconversion"/>
    <property type="evidence" value="ECO:0007669"/>
    <property type="project" value="UniProtKB-UniRule"/>
</dbReference>
<dbReference type="CDD" id="cd00378">
    <property type="entry name" value="SHMT"/>
    <property type="match status" value="1"/>
</dbReference>
<dbReference type="FunFam" id="3.40.640.10:FF:000001">
    <property type="entry name" value="Serine hydroxymethyltransferase"/>
    <property type="match status" value="1"/>
</dbReference>
<dbReference type="FunFam" id="3.90.1150.10:FF:000003">
    <property type="entry name" value="Serine hydroxymethyltransferase"/>
    <property type="match status" value="1"/>
</dbReference>
<dbReference type="Gene3D" id="3.90.1150.10">
    <property type="entry name" value="Aspartate Aminotransferase, domain 1"/>
    <property type="match status" value="1"/>
</dbReference>
<dbReference type="Gene3D" id="3.40.640.10">
    <property type="entry name" value="Type I PLP-dependent aspartate aminotransferase-like (Major domain)"/>
    <property type="match status" value="1"/>
</dbReference>
<dbReference type="HAMAP" id="MF_00051">
    <property type="entry name" value="SHMT"/>
    <property type="match status" value="1"/>
</dbReference>
<dbReference type="InterPro" id="IPR015424">
    <property type="entry name" value="PyrdxlP-dep_Trfase"/>
</dbReference>
<dbReference type="InterPro" id="IPR015421">
    <property type="entry name" value="PyrdxlP-dep_Trfase_major"/>
</dbReference>
<dbReference type="InterPro" id="IPR015422">
    <property type="entry name" value="PyrdxlP-dep_Trfase_small"/>
</dbReference>
<dbReference type="InterPro" id="IPR001085">
    <property type="entry name" value="Ser_HO-MeTrfase"/>
</dbReference>
<dbReference type="InterPro" id="IPR049943">
    <property type="entry name" value="Ser_HO-MeTrfase-like"/>
</dbReference>
<dbReference type="InterPro" id="IPR019798">
    <property type="entry name" value="Ser_HO-MeTrfase_PLP_BS"/>
</dbReference>
<dbReference type="InterPro" id="IPR039429">
    <property type="entry name" value="SHMT-like_dom"/>
</dbReference>
<dbReference type="NCBIfam" id="NF000586">
    <property type="entry name" value="PRK00011.1"/>
    <property type="match status" value="1"/>
</dbReference>
<dbReference type="PANTHER" id="PTHR11680">
    <property type="entry name" value="SERINE HYDROXYMETHYLTRANSFERASE"/>
    <property type="match status" value="1"/>
</dbReference>
<dbReference type="PANTHER" id="PTHR11680:SF35">
    <property type="entry name" value="SERINE HYDROXYMETHYLTRANSFERASE 1"/>
    <property type="match status" value="1"/>
</dbReference>
<dbReference type="Pfam" id="PF00464">
    <property type="entry name" value="SHMT"/>
    <property type="match status" value="1"/>
</dbReference>
<dbReference type="PIRSF" id="PIRSF000412">
    <property type="entry name" value="SHMT"/>
    <property type="match status" value="1"/>
</dbReference>
<dbReference type="SUPFAM" id="SSF53383">
    <property type="entry name" value="PLP-dependent transferases"/>
    <property type="match status" value="1"/>
</dbReference>
<dbReference type="PROSITE" id="PS00096">
    <property type="entry name" value="SHMT"/>
    <property type="match status" value="1"/>
</dbReference>
<accession>C3LFJ0</accession>
<proteinExistence type="inferred from homology"/>
<gene>
    <name evidence="1" type="primary">glyA</name>
    <name type="ordered locus">BAMEG_5605</name>
</gene>
<keyword id="KW-0028">Amino-acid biosynthesis</keyword>
<keyword id="KW-0963">Cytoplasm</keyword>
<keyword id="KW-0554">One-carbon metabolism</keyword>
<keyword id="KW-0663">Pyridoxal phosphate</keyword>
<keyword id="KW-0808">Transferase</keyword>
<protein>
    <recommendedName>
        <fullName evidence="1">Serine hydroxymethyltransferase</fullName>
        <shortName evidence="1">SHMT</shortName>
        <shortName evidence="1">Serine methylase</shortName>
        <ecNumber evidence="1">2.1.2.1</ecNumber>
    </recommendedName>
</protein>
<name>GLYA_BACAC</name>
<comment type="function">
    <text evidence="1">Catalyzes the reversible interconversion of serine and glycine with tetrahydrofolate (THF) serving as the one-carbon carrier. This reaction serves as the major source of one-carbon groups required for the biosynthesis of purines, thymidylate, methionine, and other important biomolecules. Also exhibits THF-independent aldolase activity toward beta-hydroxyamino acids, producing glycine and aldehydes, via a retro-aldol mechanism.</text>
</comment>
<comment type="catalytic activity">
    <reaction evidence="1">
        <text>(6R)-5,10-methylene-5,6,7,8-tetrahydrofolate + glycine + H2O = (6S)-5,6,7,8-tetrahydrofolate + L-serine</text>
        <dbReference type="Rhea" id="RHEA:15481"/>
        <dbReference type="ChEBI" id="CHEBI:15377"/>
        <dbReference type="ChEBI" id="CHEBI:15636"/>
        <dbReference type="ChEBI" id="CHEBI:33384"/>
        <dbReference type="ChEBI" id="CHEBI:57305"/>
        <dbReference type="ChEBI" id="CHEBI:57453"/>
        <dbReference type="EC" id="2.1.2.1"/>
    </reaction>
</comment>
<comment type="cofactor">
    <cofactor evidence="1">
        <name>pyridoxal 5'-phosphate</name>
        <dbReference type="ChEBI" id="CHEBI:597326"/>
    </cofactor>
</comment>
<comment type="pathway">
    <text evidence="1">One-carbon metabolism; tetrahydrofolate interconversion.</text>
</comment>
<comment type="pathway">
    <text evidence="1">Amino-acid biosynthesis; glycine biosynthesis; glycine from L-serine: step 1/1.</text>
</comment>
<comment type="subunit">
    <text evidence="1">Homodimer.</text>
</comment>
<comment type="subcellular location">
    <subcellularLocation>
        <location evidence="1">Cytoplasm</location>
    </subcellularLocation>
</comment>
<comment type="similarity">
    <text evidence="1">Belongs to the SHMT family.</text>
</comment>
<organism>
    <name type="scientific">Bacillus anthracis (strain CDC 684 / NRRL 3495)</name>
    <dbReference type="NCBI Taxonomy" id="568206"/>
    <lineage>
        <taxon>Bacteria</taxon>
        <taxon>Bacillati</taxon>
        <taxon>Bacillota</taxon>
        <taxon>Bacilli</taxon>
        <taxon>Bacillales</taxon>
        <taxon>Bacillaceae</taxon>
        <taxon>Bacillus</taxon>
        <taxon>Bacillus cereus group</taxon>
    </lineage>
</organism>
<evidence type="ECO:0000255" key="1">
    <source>
        <dbReference type="HAMAP-Rule" id="MF_00051"/>
    </source>
</evidence>
<reference key="1">
    <citation type="submission" date="2008-10" db="EMBL/GenBank/DDBJ databases">
        <title>Genome sequence of Bacillus anthracis str. CDC 684.</title>
        <authorList>
            <person name="Dodson R.J."/>
            <person name="Munk A.C."/>
            <person name="Brettin T."/>
            <person name="Bruce D."/>
            <person name="Detter C."/>
            <person name="Tapia R."/>
            <person name="Han C."/>
            <person name="Sutton G."/>
            <person name="Sims D."/>
        </authorList>
    </citation>
    <scope>NUCLEOTIDE SEQUENCE [LARGE SCALE GENOMIC DNA]</scope>
    <source>
        <strain>CDC 684 / NRRL 3495</strain>
    </source>
</reference>
<feature type="chain" id="PRO_1000195430" description="Serine hydroxymethyltransferase">
    <location>
        <begin position="1"/>
        <end position="413"/>
    </location>
</feature>
<feature type="binding site" evidence="1">
    <location>
        <position position="117"/>
    </location>
    <ligand>
        <name>(6S)-5,6,7,8-tetrahydrofolate</name>
        <dbReference type="ChEBI" id="CHEBI:57453"/>
    </ligand>
</feature>
<feature type="binding site" evidence="1">
    <location>
        <begin position="121"/>
        <end position="123"/>
    </location>
    <ligand>
        <name>(6S)-5,6,7,8-tetrahydrofolate</name>
        <dbReference type="ChEBI" id="CHEBI:57453"/>
    </ligand>
</feature>
<feature type="binding site" evidence="1">
    <location>
        <position position="239"/>
    </location>
    <ligand>
        <name>(6S)-5,6,7,8-tetrahydrofolate</name>
        <dbReference type="ChEBI" id="CHEBI:57453"/>
    </ligand>
</feature>
<feature type="binding site" evidence="1">
    <location>
        <begin position="349"/>
        <end position="351"/>
    </location>
    <ligand>
        <name>(6S)-5,6,7,8-tetrahydrofolate</name>
        <dbReference type="ChEBI" id="CHEBI:57453"/>
    </ligand>
</feature>
<feature type="site" description="Plays an important role in substrate specificity" evidence="1">
    <location>
        <position position="225"/>
    </location>
</feature>
<feature type="modified residue" description="N6-(pyridoxal phosphate)lysine" evidence="1">
    <location>
        <position position="226"/>
    </location>
</feature>